<accession>B0BSZ4</accession>
<comment type="similarity">
    <text evidence="1">Belongs to the bacterial ribosomal protein bL36 family.</text>
</comment>
<reference key="1">
    <citation type="journal article" date="2008" name="PLoS ONE">
        <title>Genome biology of Actinobacillus pleuropneumoniae JL03, an isolate of serotype 3 prevalent in China.</title>
        <authorList>
            <person name="Xu Z."/>
            <person name="Zhou Y."/>
            <person name="Li L."/>
            <person name="Zhou R."/>
            <person name="Xiao S."/>
            <person name="Wan Y."/>
            <person name="Zhang S."/>
            <person name="Wang K."/>
            <person name="Li W."/>
            <person name="Li L."/>
            <person name="Jin H."/>
            <person name="Kang M."/>
            <person name="Dalai B."/>
            <person name="Li T."/>
            <person name="Liu L."/>
            <person name="Cheng Y."/>
            <person name="Zhang L."/>
            <person name="Xu T."/>
            <person name="Zheng H."/>
            <person name="Pu S."/>
            <person name="Wang B."/>
            <person name="Gu W."/>
            <person name="Zhang X.L."/>
            <person name="Zhu G.-F."/>
            <person name="Wang S."/>
            <person name="Zhao G.-P."/>
            <person name="Chen H."/>
        </authorList>
    </citation>
    <scope>NUCLEOTIDE SEQUENCE [LARGE SCALE GENOMIC DNA]</scope>
    <source>
        <strain>JL03</strain>
    </source>
</reference>
<gene>
    <name evidence="1" type="primary">rpmJ2</name>
    <name type="ordered locus">APJL_1858</name>
</gene>
<feature type="chain" id="PRO_0000344635" description="Large ribosomal subunit protein bL36B">
    <location>
        <begin position="1"/>
        <end position="41"/>
    </location>
</feature>
<protein>
    <recommendedName>
        <fullName evidence="1">Large ribosomal subunit protein bL36B</fullName>
    </recommendedName>
    <alternativeName>
        <fullName evidence="2">50S ribosomal protein L36 2</fullName>
    </alternativeName>
</protein>
<organism>
    <name type="scientific">Actinobacillus pleuropneumoniae serotype 3 (strain JL03)</name>
    <dbReference type="NCBI Taxonomy" id="434271"/>
    <lineage>
        <taxon>Bacteria</taxon>
        <taxon>Pseudomonadati</taxon>
        <taxon>Pseudomonadota</taxon>
        <taxon>Gammaproteobacteria</taxon>
        <taxon>Pasteurellales</taxon>
        <taxon>Pasteurellaceae</taxon>
        <taxon>Actinobacillus</taxon>
    </lineage>
</organism>
<proteinExistence type="inferred from homology"/>
<keyword id="KW-0687">Ribonucleoprotein</keyword>
<keyword id="KW-0689">Ribosomal protein</keyword>
<dbReference type="EMBL" id="CP000687">
    <property type="protein sequence ID" value="ABY70408.1"/>
    <property type="molecule type" value="Genomic_DNA"/>
</dbReference>
<dbReference type="SMR" id="B0BSZ4"/>
<dbReference type="KEGG" id="apj:APJL_1858"/>
<dbReference type="HOGENOM" id="CLU_135723_3_3_6"/>
<dbReference type="Proteomes" id="UP000008547">
    <property type="component" value="Chromosome"/>
</dbReference>
<dbReference type="GO" id="GO:1990904">
    <property type="term" value="C:ribonucleoprotein complex"/>
    <property type="evidence" value="ECO:0007669"/>
    <property type="project" value="UniProtKB-KW"/>
</dbReference>
<dbReference type="GO" id="GO:0005840">
    <property type="term" value="C:ribosome"/>
    <property type="evidence" value="ECO:0007669"/>
    <property type="project" value="UniProtKB-KW"/>
</dbReference>
<dbReference type="GO" id="GO:0003735">
    <property type="term" value="F:structural constituent of ribosome"/>
    <property type="evidence" value="ECO:0007669"/>
    <property type="project" value="InterPro"/>
</dbReference>
<dbReference type="GO" id="GO:0006412">
    <property type="term" value="P:translation"/>
    <property type="evidence" value="ECO:0007669"/>
    <property type="project" value="UniProtKB-UniRule"/>
</dbReference>
<dbReference type="HAMAP" id="MF_00251">
    <property type="entry name" value="Ribosomal_bL36"/>
    <property type="match status" value="1"/>
</dbReference>
<dbReference type="InterPro" id="IPR000473">
    <property type="entry name" value="Ribosomal_bL36"/>
</dbReference>
<dbReference type="InterPro" id="IPR035977">
    <property type="entry name" value="Ribosomal_bL36_sp"/>
</dbReference>
<dbReference type="InterPro" id="IPR047621">
    <property type="entry name" value="Ribosomal_L36_bact"/>
</dbReference>
<dbReference type="NCBIfam" id="NF002021">
    <property type="entry name" value="PRK00831.1"/>
    <property type="match status" value="1"/>
</dbReference>
<dbReference type="NCBIfam" id="TIGR01022">
    <property type="entry name" value="rpmJ_bact"/>
    <property type="match status" value="1"/>
</dbReference>
<dbReference type="PANTHER" id="PTHR47781">
    <property type="entry name" value="50S RIBOSOMAL PROTEIN L36 2"/>
    <property type="match status" value="1"/>
</dbReference>
<dbReference type="PANTHER" id="PTHR47781:SF1">
    <property type="entry name" value="LARGE RIBOSOMAL SUBUNIT PROTEIN BL36B"/>
    <property type="match status" value="1"/>
</dbReference>
<dbReference type="Pfam" id="PF00444">
    <property type="entry name" value="Ribosomal_L36"/>
    <property type="match status" value="1"/>
</dbReference>
<dbReference type="SUPFAM" id="SSF57840">
    <property type="entry name" value="Ribosomal protein L36"/>
    <property type="match status" value="1"/>
</dbReference>
<dbReference type="PROSITE" id="PS00828">
    <property type="entry name" value="RIBOSOMAL_L36"/>
    <property type="match status" value="1"/>
</dbReference>
<evidence type="ECO:0000255" key="1">
    <source>
        <dbReference type="HAMAP-Rule" id="MF_00251"/>
    </source>
</evidence>
<evidence type="ECO:0000305" key="2"/>
<name>RL362_ACTPJ</name>
<sequence length="41" mass="4884">MKILNSLKTAKTRHPDCQIVRRKGKLYVICKSNPRFKARQR</sequence>